<organism>
    <name type="scientific">Escherichia coli O6:K15:H31 (strain 536 / UPEC)</name>
    <dbReference type="NCBI Taxonomy" id="362663"/>
    <lineage>
        <taxon>Bacteria</taxon>
        <taxon>Pseudomonadati</taxon>
        <taxon>Pseudomonadota</taxon>
        <taxon>Gammaproteobacteria</taxon>
        <taxon>Enterobacterales</taxon>
        <taxon>Enterobacteriaceae</taxon>
        <taxon>Escherichia</taxon>
    </lineage>
</organism>
<accession>Q0TLT6</accession>
<evidence type="ECO:0000255" key="1">
    <source>
        <dbReference type="HAMAP-Rule" id="MF_00607"/>
    </source>
</evidence>
<gene>
    <name evidence="1" type="primary">rsmA</name>
    <name evidence="1" type="synonym">ksgA</name>
    <name type="ordered locus">ECP_0053</name>
</gene>
<reference key="1">
    <citation type="journal article" date="2006" name="Mol. Microbiol.">
        <title>Role of pathogenicity island-associated integrases in the genome plasticity of uropathogenic Escherichia coli strain 536.</title>
        <authorList>
            <person name="Hochhut B."/>
            <person name="Wilde C."/>
            <person name="Balling G."/>
            <person name="Middendorf B."/>
            <person name="Dobrindt U."/>
            <person name="Brzuszkiewicz E."/>
            <person name="Gottschalk G."/>
            <person name="Carniel E."/>
            <person name="Hacker J."/>
        </authorList>
    </citation>
    <scope>NUCLEOTIDE SEQUENCE [LARGE SCALE GENOMIC DNA]</scope>
    <source>
        <strain>536 / UPEC</strain>
    </source>
</reference>
<comment type="function">
    <text evidence="1">Specifically dimethylates two adjacent adenosines (A1518 and A1519) in the loop of a conserved hairpin near the 3'-end of 16S rRNA in the 30S particle. May play a critical role in biogenesis of 30S subunits.</text>
</comment>
<comment type="catalytic activity">
    <reaction evidence="1">
        <text>adenosine(1518)/adenosine(1519) in 16S rRNA + 4 S-adenosyl-L-methionine = N(6)-dimethyladenosine(1518)/N(6)-dimethyladenosine(1519) in 16S rRNA + 4 S-adenosyl-L-homocysteine + 4 H(+)</text>
        <dbReference type="Rhea" id="RHEA:19609"/>
        <dbReference type="Rhea" id="RHEA-COMP:10232"/>
        <dbReference type="Rhea" id="RHEA-COMP:10233"/>
        <dbReference type="ChEBI" id="CHEBI:15378"/>
        <dbReference type="ChEBI" id="CHEBI:57856"/>
        <dbReference type="ChEBI" id="CHEBI:59789"/>
        <dbReference type="ChEBI" id="CHEBI:74411"/>
        <dbReference type="ChEBI" id="CHEBI:74493"/>
        <dbReference type="EC" id="2.1.1.182"/>
    </reaction>
</comment>
<comment type="subcellular location">
    <subcellularLocation>
        <location evidence="1">Cytoplasm</location>
    </subcellularLocation>
</comment>
<comment type="similarity">
    <text evidence="1">Belongs to the class I-like SAM-binding methyltransferase superfamily. rRNA adenine N(6)-methyltransferase family. RsmA subfamily.</text>
</comment>
<keyword id="KW-0963">Cytoplasm</keyword>
<keyword id="KW-0489">Methyltransferase</keyword>
<keyword id="KW-0694">RNA-binding</keyword>
<keyword id="KW-0698">rRNA processing</keyword>
<keyword id="KW-0949">S-adenosyl-L-methionine</keyword>
<keyword id="KW-0808">Transferase</keyword>
<proteinExistence type="inferred from homology"/>
<dbReference type="EC" id="2.1.1.182" evidence="1"/>
<dbReference type="EMBL" id="CP000247">
    <property type="protein sequence ID" value="ABG68095.1"/>
    <property type="molecule type" value="Genomic_DNA"/>
</dbReference>
<dbReference type="RefSeq" id="WP_001065363.1">
    <property type="nucleotide sequence ID" value="NC_008253.1"/>
</dbReference>
<dbReference type="SMR" id="Q0TLT6"/>
<dbReference type="KEGG" id="ecp:ECP_0053"/>
<dbReference type="HOGENOM" id="CLU_041220_0_1_6"/>
<dbReference type="Proteomes" id="UP000009182">
    <property type="component" value="Chromosome"/>
</dbReference>
<dbReference type="GO" id="GO:0005829">
    <property type="term" value="C:cytosol"/>
    <property type="evidence" value="ECO:0007669"/>
    <property type="project" value="TreeGrafter"/>
</dbReference>
<dbReference type="GO" id="GO:0052908">
    <property type="term" value="F:16S rRNA (adenine(1518)-N(6)/adenine(1519)-N(6))-dimethyltransferase activity"/>
    <property type="evidence" value="ECO:0007669"/>
    <property type="project" value="UniProtKB-EC"/>
</dbReference>
<dbReference type="GO" id="GO:0003723">
    <property type="term" value="F:RNA binding"/>
    <property type="evidence" value="ECO:0007669"/>
    <property type="project" value="UniProtKB-KW"/>
</dbReference>
<dbReference type="FunFam" id="1.10.8.100:FF:000001">
    <property type="entry name" value="Ribosomal RNA small subunit methyltransferase A"/>
    <property type="match status" value="1"/>
</dbReference>
<dbReference type="FunFam" id="3.40.50.150:FF:000006">
    <property type="entry name" value="Ribosomal RNA small subunit methyltransferase A"/>
    <property type="match status" value="1"/>
</dbReference>
<dbReference type="Gene3D" id="1.10.8.100">
    <property type="entry name" value="Ribosomal RNA adenine dimethylase-like, domain 2"/>
    <property type="match status" value="1"/>
</dbReference>
<dbReference type="Gene3D" id="3.40.50.150">
    <property type="entry name" value="Vaccinia Virus protein VP39"/>
    <property type="match status" value="1"/>
</dbReference>
<dbReference type="HAMAP" id="MF_00607">
    <property type="entry name" value="16SrRNA_methyltr_A"/>
    <property type="match status" value="1"/>
</dbReference>
<dbReference type="InterPro" id="IPR001737">
    <property type="entry name" value="KsgA/Erm"/>
</dbReference>
<dbReference type="InterPro" id="IPR023165">
    <property type="entry name" value="rRNA_Ade_diMease-like_C"/>
</dbReference>
<dbReference type="InterPro" id="IPR020596">
    <property type="entry name" value="rRNA_Ade_Mease_Trfase_CS"/>
</dbReference>
<dbReference type="InterPro" id="IPR020598">
    <property type="entry name" value="rRNA_Ade_methylase_Trfase_N"/>
</dbReference>
<dbReference type="InterPro" id="IPR011530">
    <property type="entry name" value="rRNA_adenine_dimethylase"/>
</dbReference>
<dbReference type="InterPro" id="IPR029063">
    <property type="entry name" value="SAM-dependent_MTases_sf"/>
</dbReference>
<dbReference type="NCBIfam" id="TIGR00755">
    <property type="entry name" value="ksgA"/>
    <property type="match status" value="1"/>
</dbReference>
<dbReference type="PANTHER" id="PTHR11727">
    <property type="entry name" value="DIMETHYLADENOSINE TRANSFERASE"/>
    <property type="match status" value="1"/>
</dbReference>
<dbReference type="PANTHER" id="PTHR11727:SF7">
    <property type="entry name" value="DIMETHYLADENOSINE TRANSFERASE-RELATED"/>
    <property type="match status" value="1"/>
</dbReference>
<dbReference type="Pfam" id="PF00398">
    <property type="entry name" value="RrnaAD"/>
    <property type="match status" value="1"/>
</dbReference>
<dbReference type="SMART" id="SM00650">
    <property type="entry name" value="rADc"/>
    <property type="match status" value="1"/>
</dbReference>
<dbReference type="SUPFAM" id="SSF53335">
    <property type="entry name" value="S-adenosyl-L-methionine-dependent methyltransferases"/>
    <property type="match status" value="1"/>
</dbReference>
<dbReference type="PROSITE" id="PS01131">
    <property type="entry name" value="RRNA_A_DIMETH"/>
    <property type="match status" value="1"/>
</dbReference>
<dbReference type="PROSITE" id="PS51689">
    <property type="entry name" value="SAM_RNA_A_N6_MT"/>
    <property type="match status" value="1"/>
</dbReference>
<protein>
    <recommendedName>
        <fullName evidence="1">Ribosomal RNA small subunit methyltransferase A</fullName>
        <ecNumber evidence="1">2.1.1.182</ecNumber>
    </recommendedName>
    <alternativeName>
        <fullName evidence="1">16S rRNA (adenine(1518)-N(6)/adenine(1519)-N(6))-dimethyltransferase</fullName>
    </alternativeName>
    <alternativeName>
        <fullName evidence="1">16S rRNA dimethyladenosine transferase</fullName>
    </alternativeName>
    <alternativeName>
        <fullName evidence="1">16S rRNA dimethylase</fullName>
    </alternativeName>
    <alternativeName>
        <fullName evidence="1">S-adenosylmethionine-6-N', N'-adenosyl(rRNA) dimethyltransferase</fullName>
    </alternativeName>
</protein>
<feature type="chain" id="PRO_0000257286" description="Ribosomal RNA small subunit methyltransferase A">
    <location>
        <begin position="1"/>
        <end position="273"/>
    </location>
</feature>
<feature type="binding site" evidence="1">
    <location>
        <position position="18"/>
    </location>
    <ligand>
        <name>S-adenosyl-L-methionine</name>
        <dbReference type="ChEBI" id="CHEBI:59789"/>
    </ligand>
</feature>
<feature type="binding site" evidence="1">
    <location>
        <position position="20"/>
    </location>
    <ligand>
        <name>S-adenosyl-L-methionine</name>
        <dbReference type="ChEBI" id="CHEBI:59789"/>
    </ligand>
</feature>
<feature type="binding site" evidence="1">
    <location>
        <position position="45"/>
    </location>
    <ligand>
        <name>S-adenosyl-L-methionine</name>
        <dbReference type="ChEBI" id="CHEBI:59789"/>
    </ligand>
</feature>
<feature type="binding site" evidence="1">
    <location>
        <position position="66"/>
    </location>
    <ligand>
        <name>S-adenosyl-L-methionine</name>
        <dbReference type="ChEBI" id="CHEBI:59789"/>
    </ligand>
</feature>
<feature type="binding site" evidence="1">
    <location>
        <position position="91"/>
    </location>
    <ligand>
        <name>S-adenosyl-L-methionine</name>
        <dbReference type="ChEBI" id="CHEBI:59789"/>
    </ligand>
</feature>
<feature type="binding site" evidence="1">
    <location>
        <position position="113"/>
    </location>
    <ligand>
        <name>S-adenosyl-L-methionine</name>
        <dbReference type="ChEBI" id="CHEBI:59789"/>
    </ligand>
</feature>
<sequence>MNNRVHQGHLARKRFGQNFLNDQFVIDSIVSAINPQKGQAMVEIGPGLAALTEPVGERLDQLTVIELDRDLAARLQTHPFLGPKLTIYQQDAMTFNFGELAAKMGQPLRVFGNLPYNISTPLMFHLFSYTDAIADMHFMLQKEVVNRLVAGPNSKAYGRLSVMAQYYCNVIPVLEVPPSAFTPPPKVDSAVVRLVPHATMPHPVKDVRVLSRITTEAFNQRRKTIRNSLGNLFSVEVLTGMGIDPAMRAENISVAQYCQMANYLAENAPLQES</sequence>
<name>RSMA_ECOL5</name>